<keyword id="KW-0007">Acetylation</keyword>
<keyword id="KW-0067">ATP-binding</keyword>
<keyword id="KW-0436">Ligase</keyword>
<keyword id="KW-0460">Magnesium</keyword>
<keyword id="KW-0479">Metal-binding</keyword>
<keyword id="KW-0547">Nucleotide-binding</keyword>
<accession>A1W1D6</accession>
<feature type="chain" id="PRO_1000065287" description="Acetyl-coenzyme A synthetase">
    <location>
        <begin position="1"/>
        <end position="657"/>
    </location>
</feature>
<feature type="binding site" evidence="1">
    <location>
        <begin position="192"/>
        <end position="195"/>
    </location>
    <ligand>
        <name>CoA</name>
        <dbReference type="ChEBI" id="CHEBI:57287"/>
    </ligand>
</feature>
<feature type="binding site" evidence="1">
    <location>
        <position position="311"/>
    </location>
    <ligand>
        <name>CoA</name>
        <dbReference type="ChEBI" id="CHEBI:57287"/>
    </ligand>
</feature>
<feature type="binding site" evidence="1">
    <location>
        <begin position="387"/>
        <end position="389"/>
    </location>
    <ligand>
        <name>ATP</name>
        <dbReference type="ChEBI" id="CHEBI:30616"/>
    </ligand>
</feature>
<feature type="binding site" evidence="1">
    <location>
        <begin position="411"/>
        <end position="416"/>
    </location>
    <ligand>
        <name>ATP</name>
        <dbReference type="ChEBI" id="CHEBI:30616"/>
    </ligand>
</feature>
<feature type="binding site" evidence="1">
    <location>
        <position position="504"/>
    </location>
    <ligand>
        <name>ATP</name>
        <dbReference type="ChEBI" id="CHEBI:30616"/>
    </ligand>
</feature>
<feature type="binding site" evidence="1">
    <location>
        <position position="519"/>
    </location>
    <ligand>
        <name>ATP</name>
        <dbReference type="ChEBI" id="CHEBI:30616"/>
    </ligand>
</feature>
<feature type="binding site" evidence="1">
    <location>
        <position position="530"/>
    </location>
    <ligand>
        <name>ATP</name>
        <dbReference type="ChEBI" id="CHEBI:30616"/>
    </ligand>
</feature>
<feature type="binding site" evidence="1">
    <location>
        <position position="543"/>
    </location>
    <ligand>
        <name>Mg(2+)</name>
        <dbReference type="ChEBI" id="CHEBI:18420"/>
    </ligand>
</feature>
<feature type="binding site" evidence="1">
    <location>
        <position position="546"/>
    </location>
    <ligand>
        <name>Mg(2+)</name>
        <dbReference type="ChEBI" id="CHEBI:18420"/>
    </ligand>
</feature>
<feature type="binding site">
    <location>
        <position position="592"/>
    </location>
    <ligand>
        <name>CoA</name>
        <dbReference type="ChEBI" id="CHEBI:57287"/>
    </ligand>
</feature>
<feature type="modified residue" description="N6-acetyllysine" evidence="1">
    <location>
        <position position="617"/>
    </location>
</feature>
<sequence>MLNQNNQELFKPSKEFSRNARIKNLCEYYDLCDEAKEDFEGFWKRQAFEKIEWFSPFSRVLNEDKAPFYKWFEGGTLNVSYQCLDRHMKTRRNKAALIFEGEMGDYEVYTYRRLLHETCKAANLLKKFGVKKGDRVVIYMPMIPETAIVMLACARIGAIHSVVFGGFSPEALRDRIIDAGAKLVVTADGAFRRGKPYMLKPAVDKALSEGCESVEKVLIVIRNNEPIEYIKGRDYVYNELVKNESYKCEPEIMDSEDLLFLLYTSGSTGKPKGVMHASAGYILWAQMTMEWVFDIKDYDNYWCSADVGWITGHTYVVYGPLACGATTIMHEGTPTYPNSGRWWRMIEEYQISKFYTSPTAIRMLHADAPNEPRKYDLSTLEVLGTVGEPINPSAWKWFYDEIGGTKSPIVDTWWQTETGGHMITPLPGATPLKPGCATLPLPGIFAEVIDEEGNKKDEGEDGLLCITKPWPSMIRGIWGNDERYIESYFSQAKKDGKAVYFSGDGAFYDKNGYITITGRTDDVVNVAGHRIGTAEIESAIAKHPSVAESAVVSILDTIKGESLFAFVVLSPASSCDLGGAIETLKELNDILRVEIGPIAKIEKILYTPGLPKTRSGKIMRRILRTIARGEEIKQDISTLEDSKVVETIVKLAKAEFE</sequence>
<dbReference type="EC" id="6.2.1.1" evidence="1"/>
<dbReference type="EMBL" id="CP000538">
    <property type="protein sequence ID" value="EAQ72526.1"/>
    <property type="molecule type" value="Genomic_DNA"/>
</dbReference>
<dbReference type="SMR" id="A1W1D6"/>
<dbReference type="KEGG" id="cjj:CJJ81176_1522"/>
<dbReference type="eggNOG" id="COG0365">
    <property type="taxonomic scope" value="Bacteria"/>
</dbReference>
<dbReference type="HOGENOM" id="CLU_000022_3_6_7"/>
<dbReference type="Proteomes" id="UP000000646">
    <property type="component" value="Chromosome"/>
</dbReference>
<dbReference type="GO" id="GO:0005829">
    <property type="term" value="C:cytosol"/>
    <property type="evidence" value="ECO:0007669"/>
    <property type="project" value="TreeGrafter"/>
</dbReference>
<dbReference type="GO" id="GO:0003987">
    <property type="term" value="F:acetate-CoA ligase activity"/>
    <property type="evidence" value="ECO:0007669"/>
    <property type="project" value="UniProtKB-UniRule"/>
</dbReference>
<dbReference type="GO" id="GO:0016208">
    <property type="term" value="F:AMP binding"/>
    <property type="evidence" value="ECO:0007669"/>
    <property type="project" value="InterPro"/>
</dbReference>
<dbReference type="GO" id="GO:0005524">
    <property type="term" value="F:ATP binding"/>
    <property type="evidence" value="ECO:0007669"/>
    <property type="project" value="UniProtKB-KW"/>
</dbReference>
<dbReference type="GO" id="GO:0046872">
    <property type="term" value="F:metal ion binding"/>
    <property type="evidence" value="ECO:0007669"/>
    <property type="project" value="UniProtKB-KW"/>
</dbReference>
<dbReference type="GO" id="GO:0019427">
    <property type="term" value="P:acetyl-CoA biosynthetic process from acetate"/>
    <property type="evidence" value="ECO:0007669"/>
    <property type="project" value="InterPro"/>
</dbReference>
<dbReference type="CDD" id="cd05966">
    <property type="entry name" value="ACS"/>
    <property type="match status" value="1"/>
</dbReference>
<dbReference type="FunFam" id="3.40.50.12780:FF:000001">
    <property type="entry name" value="Acetyl-coenzyme A synthetase"/>
    <property type="match status" value="1"/>
</dbReference>
<dbReference type="Gene3D" id="3.30.300.30">
    <property type="match status" value="1"/>
</dbReference>
<dbReference type="Gene3D" id="3.40.50.12780">
    <property type="entry name" value="N-terminal domain of ligase-like"/>
    <property type="match status" value="1"/>
</dbReference>
<dbReference type="HAMAP" id="MF_01123">
    <property type="entry name" value="Ac_CoA_synth"/>
    <property type="match status" value="1"/>
</dbReference>
<dbReference type="InterPro" id="IPR011904">
    <property type="entry name" value="Ac_CoA_lig"/>
</dbReference>
<dbReference type="InterPro" id="IPR032387">
    <property type="entry name" value="ACAS_N"/>
</dbReference>
<dbReference type="InterPro" id="IPR025110">
    <property type="entry name" value="AMP-bd_C"/>
</dbReference>
<dbReference type="InterPro" id="IPR045851">
    <property type="entry name" value="AMP-bd_C_sf"/>
</dbReference>
<dbReference type="InterPro" id="IPR020845">
    <property type="entry name" value="AMP-binding_CS"/>
</dbReference>
<dbReference type="InterPro" id="IPR000873">
    <property type="entry name" value="AMP-dep_synth/lig_dom"/>
</dbReference>
<dbReference type="InterPro" id="IPR042099">
    <property type="entry name" value="ANL_N_sf"/>
</dbReference>
<dbReference type="NCBIfam" id="TIGR02188">
    <property type="entry name" value="Ac_CoA_lig_AcsA"/>
    <property type="match status" value="1"/>
</dbReference>
<dbReference type="NCBIfam" id="NF001208">
    <property type="entry name" value="PRK00174.1"/>
    <property type="match status" value="1"/>
</dbReference>
<dbReference type="PANTHER" id="PTHR24095">
    <property type="entry name" value="ACETYL-COENZYME A SYNTHETASE"/>
    <property type="match status" value="1"/>
</dbReference>
<dbReference type="PANTHER" id="PTHR24095:SF14">
    <property type="entry name" value="ACETYL-COENZYME A SYNTHETASE 1"/>
    <property type="match status" value="1"/>
</dbReference>
<dbReference type="Pfam" id="PF16177">
    <property type="entry name" value="ACAS_N"/>
    <property type="match status" value="1"/>
</dbReference>
<dbReference type="Pfam" id="PF00501">
    <property type="entry name" value="AMP-binding"/>
    <property type="match status" value="1"/>
</dbReference>
<dbReference type="Pfam" id="PF13193">
    <property type="entry name" value="AMP-binding_C"/>
    <property type="match status" value="1"/>
</dbReference>
<dbReference type="SUPFAM" id="SSF56801">
    <property type="entry name" value="Acetyl-CoA synthetase-like"/>
    <property type="match status" value="1"/>
</dbReference>
<dbReference type="PROSITE" id="PS00455">
    <property type="entry name" value="AMP_BINDING"/>
    <property type="match status" value="1"/>
</dbReference>
<evidence type="ECO:0000255" key="1">
    <source>
        <dbReference type="HAMAP-Rule" id="MF_01123"/>
    </source>
</evidence>
<name>ACSA_CAMJJ</name>
<protein>
    <recommendedName>
        <fullName evidence="1">Acetyl-coenzyme A synthetase</fullName>
        <shortName evidence="1">AcCoA synthetase</shortName>
        <shortName evidence="1">Acs</shortName>
        <ecNumber evidence="1">6.2.1.1</ecNumber>
    </recommendedName>
    <alternativeName>
        <fullName evidence="1">Acetate--CoA ligase</fullName>
    </alternativeName>
    <alternativeName>
        <fullName evidence="1">Acyl-activating enzyme</fullName>
    </alternativeName>
</protein>
<reference key="1">
    <citation type="submission" date="2006-12" db="EMBL/GenBank/DDBJ databases">
        <authorList>
            <person name="Fouts D.E."/>
            <person name="Nelson K.E."/>
            <person name="Sebastian Y."/>
        </authorList>
    </citation>
    <scope>NUCLEOTIDE SEQUENCE [LARGE SCALE GENOMIC DNA]</scope>
    <source>
        <strain>81-176</strain>
    </source>
</reference>
<organism>
    <name type="scientific">Campylobacter jejuni subsp. jejuni serotype O:23/36 (strain 81-176)</name>
    <dbReference type="NCBI Taxonomy" id="354242"/>
    <lineage>
        <taxon>Bacteria</taxon>
        <taxon>Pseudomonadati</taxon>
        <taxon>Campylobacterota</taxon>
        <taxon>Epsilonproteobacteria</taxon>
        <taxon>Campylobacterales</taxon>
        <taxon>Campylobacteraceae</taxon>
        <taxon>Campylobacter</taxon>
    </lineage>
</organism>
<proteinExistence type="inferred from homology"/>
<gene>
    <name evidence="1" type="primary">acsA</name>
    <name type="ordered locus">CJJ81176_1522</name>
</gene>
<comment type="function">
    <text evidence="1">Catalyzes the conversion of acetate into acetyl-CoA (AcCoA), an essential intermediate at the junction of anabolic and catabolic pathways. AcsA undergoes a two-step reaction. In the first half reaction, AcsA combines acetate with ATP to form acetyl-adenylate (AcAMP) intermediate. In the second half reaction, it can then transfer the acetyl group from AcAMP to the sulfhydryl group of CoA, forming the product AcCoA.</text>
</comment>
<comment type="catalytic activity">
    <reaction evidence="1">
        <text>acetate + ATP + CoA = acetyl-CoA + AMP + diphosphate</text>
        <dbReference type="Rhea" id="RHEA:23176"/>
        <dbReference type="ChEBI" id="CHEBI:30089"/>
        <dbReference type="ChEBI" id="CHEBI:30616"/>
        <dbReference type="ChEBI" id="CHEBI:33019"/>
        <dbReference type="ChEBI" id="CHEBI:57287"/>
        <dbReference type="ChEBI" id="CHEBI:57288"/>
        <dbReference type="ChEBI" id="CHEBI:456215"/>
        <dbReference type="EC" id="6.2.1.1"/>
    </reaction>
</comment>
<comment type="cofactor">
    <cofactor evidence="1">
        <name>Mg(2+)</name>
        <dbReference type="ChEBI" id="CHEBI:18420"/>
    </cofactor>
</comment>
<comment type="PTM">
    <text evidence="1">Acetylated. Deacetylation by the SIR2-homolog deacetylase activates the enzyme.</text>
</comment>
<comment type="similarity">
    <text evidence="1">Belongs to the ATP-dependent AMP-binding enzyme family.</text>
</comment>